<sequence length="361" mass="41040">MDKYELVKDIGAGNFGVARLMRVKNSKELVAMKYIERGPKIDENVAREIINHRSLRHPNIIRFKEVVLTPTHIAIAMEYAAGGELFERICSAGRFSEDEARYFFQQLISGVSYCHAMQICHRDLKLENTLLDGSPAPRLKICDFGYSKSSLLHSMPKSTVGTPAYIAPEVLSRGEYDGKMADVWSCGVTLYVMLVGAYPFEDQEDPKNFKKTIQRIMAVKYKIPDYVHISQDCKHLLSRIFVTNSNKRITIGDIKKHPWFLKNLPRELTEIAQAAYFRKENPTFSLQSVEEIMKIVEEAKTPARVSRSIGAFGWGGGEDAEGKEEDAEEEVEEVEEEEDEEDEYDKTVKQVHASMGEVRVS</sequence>
<reference key="1">
    <citation type="journal article" date="2000" name="Nature">
        <title>Sequence and analysis of chromosome 1 of the plant Arabidopsis thaliana.</title>
        <authorList>
            <person name="Theologis A."/>
            <person name="Ecker J.R."/>
            <person name="Palm C.J."/>
            <person name="Federspiel N.A."/>
            <person name="Kaul S."/>
            <person name="White O."/>
            <person name="Alonso J."/>
            <person name="Altafi H."/>
            <person name="Araujo R."/>
            <person name="Bowman C.L."/>
            <person name="Brooks S.Y."/>
            <person name="Buehler E."/>
            <person name="Chan A."/>
            <person name="Chao Q."/>
            <person name="Chen H."/>
            <person name="Cheuk R.F."/>
            <person name="Chin C.W."/>
            <person name="Chung M.K."/>
            <person name="Conn L."/>
            <person name="Conway A.B."/>
            <person name="Conway A.R."/>
            <person name="Creasy T.H."/>
            <person name="Dewar K."/>
            <person name="Dunn P."/>
            <person name="Etgu P."/>
            <person name="Feldblyum T.V."/>
            <person name="Feng J.-D."/>
            <person name="Fong B."/>
            <person name="Fujii C.Y."/>
            <person name="Gill J.E."/>
            <person name="Goldsmith A.D."/>
            <person name="Haas B."/>
            <person name="Hansen N.F."/>
            <person name="Hughes B."/>
            <person name="Huizar L."/>
            <person name="Hunter J.L."/>
            <person name="Jenkins J."/>
            <person name="Johnson-Hopson C."/>
            <person name="Khan S."/>
            <person name="Khaykin E."/>
            <person name="Kim C.J."/>
            <person name="Koo H.L."/>
            <person name="Kremenetskaia I."/>
            <person name="Kurtz D.B."/>
            <person name="Kwan A."/>
            <person name="Lam B."/>
            <person name="Langin-Hooper S."/>
            <person name="Lee A."/>
            <person name="Lee J.M."/>
            <person name="Lenz C.A."/>
            <person name="Li J.H."/>
            <person name="Li Y.-P."/>
            <person name="Lin X."/>
            <person name="Liu S.X."/>
            <person name="Liu Z.A."/>
            <person name="Luros J.S."/>
            <person name="Maiti R."/>
            <person name="Marziali A."/>
            <person name="Militscher J."/>
            <person name="Miranda M."/>
            <person name="Nguyen M."/>
            <person name="Nierman W.C."/>
            <person name="Osborne B.I."/>
            <person name="Pai G."/>
            <person name="Peterson J."/>
            <person name="Pham P.K."/>
            <person name="Rizzo M."/>
            <person name="Rooney T."/>
            <person name="Rowley D."/>
            <person name="Sakano H."/>
            <person name="Salzberg S.L."/>
            <person name="Schwartz J.R."/>
            <person name="Shinn P."/>
            <person name="Southwick A.M."/>
            <person name="Sun H."/>
            <person name="Tallon L.J."/>
            <person name="Tambunga G."/>
            <person name="Toriumi M.J."/>
            <person name="Town C.D."/>
            <person name="Utterback T."/>
            <person name="Van Aken S."/>
            <person name="Vaysberg M."/>
            <person name="Vysotskaia V.S."/>
            <person name="Walker M."/>
            <person name="Wu D."/>
            <person name="Yu G."/>
            <person name="Fraser C.M."/>
            <person name="Venter J.C."/>
            <person name="Davis R.W."/>
        </authorList>
    </citation>
    <scope>NUCLEOTIDE SEQUENCE [LARGE SCALE GENOMIC DNA]</scope>
    <source>
        <strain>cv. Columbia</strain>
    </source>
</reference>
<reference key="2">
    <citation type="journal article" date="2017" name="Plant J.">
        <title>Araport11: a complete reannotation of the Arabidopsis thaliana reference genome.</title>
        <authorList>
            <person name="Cheng C.Y."/>
            <person name="Krishnakumar V."/>
            <person name="Chan A.P."/>
            <person name="Thibaud-Nissen F."/>
            <person name="Schobel S."/>
            <person name="Town C.D."/>
        </authorList>
    </citation>
    <scope>GENOME REANNOTATION</scope>
    <source>
        <strain>cv. Columbia</strain>
    </source>
</reference>
<reference key="3">
    <citation type="journal article" date="2003" name="Science">
        <title>Empirical analysis of transcriptional activity in the Arabidopsis genome.</title>
        <authorList>
            <person name="Yamada K."/>
            <person name="Lim J."/>
            <person name="Dale J.M."/>
            <person name="Chen H."/>
            <person name="Shinn P."/>
            <person name="Palm C.J."/>
            <person name="Southwick A.M."/>
            <person name="Wu H.C."/>
            <person name="Kim C.J."/>
            <person name="Nguyen M."/>
            <person name="Pham P.K."/>
            <person name="Cheuk R.F."/>
            <person name="Karlin-Newmann G."/>
            <person name="Liu S.X."/>
            <person name="Lam B."/>
            <person name="Sakano H."/>
            <person name="Wu T."/>
            <person name="Yu G."/>
            <person name="Miranda M."/>
            <person name="Quach H.L."/>
            <person name="Tripp M."/>
            <person name="Chang C.H."/>
            <person name="Lee J.M."/>
            <person name="Toriumi M.J."/>
            <person name="Chan M.M."/>
            <person name="Tang C.C."/>
            <person name="Onodera C.S."/>
            <person name="Deng J.M."/>
            <person name="Akiyama K."/>
            <person name="Ansari Y."/>
            <person name="Arakawa T."/>
            <person name="Banh J."/>
            <person name="Banno F."/>
            <person name="Bowser L."/>
            <person name="Brooks S.Y."/>
            <person name="Carninci P."/>
            <person name="Chao Q."/>
            <person name="Choy N."/>
            <person name="Enju A."/>
            <person name="Goldsmith A.D."/>
            <person name="Gurjal M."/>
            <person name="Hansen N.F."/>
            <person name="Hayashizaki Y."/>
            <person name="Johnson-Hopson C."/>
            <person name="Hsuan V.W."/>
            <person name="Iida K."/>
            <person name="Karnes M."/>
            <person name="Khan S."/>
            <person name="Koesema E."/>
            <person name="Ishida J."/>
            <person name="Jiang P.X."/>
            <person name="Jones T."/>
            <person name="Kawai J."/>
            <person name="Kamiya A."/>
            <person name="Meyers C."/>
            <person name="Nakajima M."/>
            <person name="Narusaka M."/>
            <person name="Seki M."/>
            <person name="Sakurai T."/>
            <person name="Satou M."/>
            <person name="Tamse R."/>
            <person name="Vaysberg M."/>
            <person name="Wallender E.K."/>
            <person name="Wong C."/>
            <person name="Yamamura Y."/>
            <person name="Yuan S."/>
            <person name="Shinozaki K."/>
            <person name="Davis R.W."/>
            <person name="Theologis A."/>
            <person name="Ecker J.R."/>
        </authorList>
    </citation>
    <scope>NUCLEOTIDE SEQUENCE [LARGE SCALE MRNA]</scope>
    <source>
        <strain>cv. Columbia</strain>
    </source>
</reference>
<reference key="4">
    <citation type="submission" date="2002-03" db="EMBL/GenBank/DDBJ databases">
        <title>Full-length cDNA from Arabidopsis thaliana.</title>
        <authorList>
            <person name="Brover V.V."/>
            <person name="Troukhan M.E."/>
            <person name="Alexandrov N.A."/>
            <person name="Lu Y.-P."/>
            <person name="Flavell R.B."/>
            <person name="Feldmann K.A."/>
        </authorList>
    </citation>
    <scope>NUCLEOTIDE SEQUENCE [LARGE SCALE MRNA]</scope>
</reference>
<reference key="5">
    <citation type="journal article" date="2003" name="Plant Physiol.">
        <title>The Arabidopsis CDPK-SnRK superfamily of protein kinases.</title>
        <authorList>
            <person name="Hrabak E.M."/>
            <person name="Chan C.W.M."/>
            <person name="Gribskov M."/>
            <person name="Harper J.F."/>
            <person name="Choi J.H."/>
            <person name="Halford N."/>
            <person name="Kudla J."/>
            <person name="Luan S."/>
            <person name="Nimmo H.G."/>
            <person name="Sussman M.R."/>
            <person name="Thomas M."/>
            <person name="Walker-Simmons K."/>
            <person name="Zhu J.-K."/>
            <person name="Harmon A.C."/>
        </authorList>
    </citation>
    <scope>GENE FAMILY</scope>
    <scope>NOMENCLATURE</scope>
</reference>
<reference key="6">
    <citation type="journal article" date="2004" name="J. Biol. Chem.">
        <title>Identification of nine sucrose nonfermenting 1-related protein kinases 2 activated by hyperosmotic and saline stresses in Arabidopsis thaliana.</title>
        <authorList>
            <person name="Boudsocq M."/>
            <person name="Barbier-Brygoo H."/>
            <person name="Lauriere C."/>
        </authorList>
    </citation>
    <scope>TISSUE SPECIFICITY</scope>
    <scope>INDUCTION</scope>
</reference>
<reference key="7">
    <citation type="journal article" date="2006" name="J. Biol. Chem.">
        <title>The regulatory domain of SRK2E/OST1/SnRK2.6 interacts with ABI1 and integrates abscisic acid (ABA) and osmotic stress signals controlling stomatal closure in Arabidopsis.</title>
        <authorList>
            <person name="Yoshida R."/>
            <person name="Umezawa T."/>
            <person name="Mizoguchi T."/>
            <person name="Takahashi S."/>
            <person name="Takahashi F."/>
            <person name="Shinozaki K."/>
        </authorList>
    </citation>
    <scope>GENE FAMILY</scope>
</reference>
<reference key="8">
    <citation type="journal article" date="2009" name="J. Proteomics">
        <title>Phosphoproteomic analysis of nuclei-enriched fractions from Arabidopsis thaliana.</title>
        <authorList>
            <person name="Jones A.M.E."/>
            <person name="MacLean D."/>
            <person name="Studholme D.J."/>
            <person name="Serna-Sanz A."/>
            <person name="Andreasson E."/>
            <person name="Rathjen J.P."/>
            <person name="Peck S.C."/>
        </authorList>
    </citation>
    <scope>PHOSPHORYLATION [LARGE SCALE ANALYSIS] AT SER-154</scope>
    <scope>IDENTIFICATION BY MASS SPECTROMETRY [LARGE SCALE ANALYSIS]</scope>
    <source>
        <strain>cv. Columbia</strain>
    </source>
</reference>
<name>SRK2B_ARATH</name>
<comment type="catalytic activity">
    <reaction>
        <text>L-seryl-[protein] + ATP = O-phospho-L-seryl-[protein] + ADP + H(+)</text>
        <dbReference type="Rhea" id="RHEA:17989"/>
        <dbReference type="Rhea" id="RHEA-COMP:9863"/>
        <dbReference type="Rhea" id="RHEA-COMP:11604"/>
        <dbReference type="ChEBI" id="CHEBI:15378"/>
        <dbReference type="ChEBI" id="CHEBI:29999"/>
        <dbReference type="ChEBI" id="CHEBI:30616"/>
        <dbReference type="ChEBI" id="CHEBI:83421"/>
        <dbReference type="ChEBI" id="CHEBI:456216"/>
        <dbReference type="EC" id="2.7.11.1"/>
    </reaction>
</comment>
<comment type="catalytic activity">
    <reaction>
        <text>L-threonyl-[protein] + ATP = O-phospho-L-threonyl-[protein] + ADP + H(+)</text>
        <dbReference type="Rhea" id="RHEA:46608"/>
        <dbReference type="Rhea" id="RHEA-COMP:11060"/>
        <dbReference type="Rhea" id="RHEA-COMP:11605"/>
        <dbReference type="ChEBI" id="CHEBI:15378"/>
        <dbReference type="ChEBI" id="CHEBI:30013"/>
        <dbReference type="ChEBI" id="CHEBI:30616"/>
        <dbReference type="ChEBI" id="CHEBI:61977"/>
        <dbReference type="ChEBI" id="CHEBI:456216"/>
        <dbReference type="EC" id="2.7.11.1"/>
    </reaction>
</comment>
<comment type="tissue specificity">
    <text evidence="4">Expressed in seedlings.</text>
</comment>
<comment type="induction">
    <text evidence="4">By salt and osmotic stress (at protein level).</text>
</comment>
<comment type="similarity">
    <text evidence="1">Belongs to the protein kinase superfamily. Ser/Thr protein kinase family.</text>
</comment>
<feature type="chain" id="PRO_0000345157" description="Serine/threonine-protein kinase SRK2B">
    <location>
        <begin position="1"/>
        <end position="361"/>
    </location>
</feature>
<feature type="domain" description="Protein kinase" evidence="1">
    <location>
        <begin position="4"/>
        <end position="260"/>
    </location>
</feature>
<feature type="region of interest" description="Disordered" evidence="3">
    <location>
        <begin position="311"/>
        <end position="361"/>
    </location>
</feature>
<feature type="compositionally biased region" description="Acidic residues" evidence="3">
    <location>
        <begin position="318"/>
        <end position="344"/>
    </location>
</feature>
<feature type="active site" description="Proton acceptor" evidence="1 2">
    <location>
        <position position="123"/>
    </location>
</feature>
<feature type="binding site" evidence="1">
    <location>
        <begin position="10"/>
        <end position="18"/>
    </location>
    <ligand>
        <name>ATP</name>
        <dbReference type="ChEBI" id="CHEBI:30616"/>
    </ligand>
</feature>
<feature type="binding site" evidence="1">
    <location>
        <position position="33"/>
    </location>
    <ligand>
        <name>ATP</name>
        <dbReference type="ChEBI" id="CHEBI:30616"/>
    </ligand>
</feature>
<feature type="modified residue" description="Phosphoserine" evidence="6">
    <location>
        <position position="154"/>
    </location>
</feature>
<feature type="sequence conflict" description="In Ref. 4; AAM67112." evidence="5" ref="4">
    <original>G</original>
    <variation>A</variation>
    <location>
        <position position="252"/>
    </location>
</feature>
<accession>Q9C958</accession>
<accession>Q8L8U6</accession>
<proteinExistence type="evidence at protein level"/>
<evidence type="ECO:0000255" key="1">
    <source>
        <dbReference type="PROSITE-ProRule" id="PRU00159"/>
    </source>
</evidence>
<evidence type="ECO:0000255" key="2">
    <source>
        <dbReference type="PROSITE-ProRule" id="PRU10027"/>
    </source>
</evidence>
<evidence type="ECO:0000256" key="3">
    <source>
        <dbReference type="SAM" id="MobiDB-lite"/>
    </source>
</evidence>
<evidence type="ECO:0000269" key="4">
    <source>
    </source>
</evidence>
<evidence type="ECO:0000305" key="5"/>
<evidence type="ECO:0007744" key="6">
    <source>
    </source>
</evidence>
<organism>
    <name type="scientific">Arabidopsis thaliana</name>
    <name type="common">Mouse-ear cress</name>
    <dbReference type="NCBI Taxonomy" id="3702"/>
    <lineage>
        <taxon>Eukaryota</taxon>
        <taxon>Viridiplantae</taxon>
        <taxon>Streptophyta</taxon>
        <taxon>Embryophyta</taxon>
        <taxon>Tracheophyta</taxon>
        <taxon>Spermatophyta</taxon>
        <taxon>Magnoliopsida</taxon>
        <taxon>eudicotyledons</taxon>
        <taxon>Gunneridae</taxon>
        <taxon>Pentapetalae</taxon>
        <taxon>rosids</taxon>
        <taxon>malvids</taxon>
        <taxon>Brassicales</taxon>
        <taxon>Brassicaceae</taxon>
        <taxon>Camelineae</taxon>
        <taxon>Arabidopsis</taxon>
    </lineage>
</organism>
<protein>
    <recommendedName>
        <fullName>Serine/threonine-protein kinase SRK2B</fullName>
        <ecNumber>2.7.11.1</ecNumber>
    </recommendedName>
    <alternativeName>
        <fullName>OST1-kinase-like 6</fullName>
    </alternativeName>
    <alternativeName>
        <fullName>SNF1-related kinase 2.10</fullName>
        <shortName>SnRK2.10</shortName>
    </alternativeName>
</protein>
<dbReference type="EC" id="2.7.11.1"/>
<dbReference type="EMBL" id="AC018908">
    <property type="protein sequence ID" value="AAG51649.1"/>
    <property type="molecule type" value="Genomic_DNA"/>
</dbReference>
<dbReference type="EMBL" id="CP002684">
    <property type="protein sequence ID" value="AEE33750.1"/>
    <property type="molecule type" value="Genomic_DNA"/>
</dbReference>
<dbReference type="EMBL" id="CP002684">
    <property type="protein sequence ID" value="AEE33751.1"/>
    <property type="molecule type" value="Genomic_DNA"/>
</dbReference>
<dbReference type="EMBL" id="AY072340">
    <property type="protein sequence ID" value="AAL61947.1"/>
    <property type="molecule type" value="mRNA"/>
</dbReference>
<dbReference type="EMBL" id="BT002546">
    <property type="protein sequence ID" value="AAO00906.1"/>
    <property type="molecule type" value="mRNA"/>
</dbReference>
<dbReference type="EMBL" id="AY088802">
    <property type="protein sequence ID" value="AAM67112.1"/>
    <property type="molecule type" value="mRNA"/>
</dbReference>
<dbReference type="PIR" id="H96634">
    <property type="entry name" value="H96634"/>
</dbReference>
<dbReference type="RefSeq" id="NP_176290.1">
    <property type="nucleotide sequence ID" value="NM_104774.6"/>
</dbReference>
<dbReference type="RefSeq" id="NP_849834.1">
    <property type="nucleotide sequence ID" value="NM_179503.3"/>
</dbReference>
<dbReference type="SMR" id="Q9C958"/>
<dbReference type="BioGRID" id="27609">
    <property type="interactions" value="7"/>
</dbReference>
<dbReference type="FunCoup" id="Q9C958">
    <property type="interactions" value="1683"/>
</dbReference>
<dbReference type="IntAct" id="Q9C958">
    <property type="interactions" value="5"/>
</dbReference>
<dbReference type="STRING" id="3702.Q9C958"/>
<dbReference type="iPTMnet" id="Q9C958"/>
<dbReference type="PaxDb" id="3702-AT1G60940.1"/>
<dbReference type="ProteomicsDB" id="226729"/>
<dbReference type="EnsemblPlants" id="AT1G60940.1">
    <property type="protein sequence ID" value="AT1G60940.1"/>
    <property type="gene ID" value="AT1G60940"/>
</dbReference>
<dbReference type="EnsemblPlants" id="AT1G60940.2">
    <property type="protein sequence ID" value="AT1G60940.2"/>
    <property type="gene ID" value="AT1G60940"/>
</dbReference>
<dbReference type="GeneID" id="842385"/>
<dbReference type="Gramene" id="AT1G60940.1">
    <property type="protein sequence ID" value="AT1G60940.1"/>
    <property type="gene ID" value="AT1G60940"/>
</dbReference>
<dbReference type="Gramene" id="AT1G60940.2">
    <property type="protein sequence ID" value="AT1G60940.2"/>
    <property type="gene ID" value="AT1G60940"/>
</dbReference>
<dbReference type="KEGG" id="ath:AT1G60940"/>
<dbReference type="Araport" id="AT1G60940"/>
<dbReference type="TAIR" id="AT1G60940">
    <property type="gene designation" value="SNRK2.10"/>
</dbReference>
<dbReference type="eggNOG" id="KOG0583">
    <property type="taxonomic scope" value="Eukaryota"/>
</dbReference>
<dbReference type="HOGENOM" id="CLU_000288_63_0_1"/>
<dbReference type="InParanoid" id="Q9C958"/>
<dbReference type="OMA" id="IRYCHDC"/>
<dbReference type="PhylomeDB" id="Q9C958"/>
<dbReference type="PRO" id="PR:Q9C958"/>
<dbReference type="Proteomes" id="UP000006548">
    <property type="component" value="Chromosome 1"/>
</dbReference>
<dbReference type="ExpressionAtlas" id="Q9C958">
    <property type="expression patterns" value="baseline and differential"/>
</dbReference>
<dbReference type="GO" id="GO:0005829">
    <property type="term" value="C:cytosol"/>
    <property type="evidence" value="ECO:0000314"/>
    <property type="project" value="TAIR"/>
</dbReference>
<dbReference type="GO" id="GO:0005634">
    <property type="term" value="C:nucleus"/>
    <property type="evidence" value="ECO:0007005"/>
    <property type="project" value="TAIR"/>
</dbReference>
<dbReference type="GO" id="GO:0005524">
    <property type="term" value="F:ATP binding"/>
    <property type="evidence" value="ECO:0007669"/>
    <property type="project" value="UniProtKB-KW"/>
</dbReference>
<dbReference type="GO" id="GO:0016301">
    <property type="term" value="F:kinase activity"/>
    <property type="evidence" value="ECO:0000314"/>
    <property type="project" value="TAIR"/>
</dbReference>
<dbReference type="GO" id="GO:0070300">
    <property type="term" value="F:phosphatidic acid binding"/>
    <property type="evidence" value="ECO:0000314"/>
    <property type="project" value="TAIR"/>
</dbReference>
<dbReference type="GO" id="GO:0004672">
    <property type="term" value="F:protein kinase activity"/>
    <property type="evidence" value="ECO:0000314"/>
    <property type="project" value="TAIR"/>
</dbReference>
<dbReference type="GO" id="GO:0106310">
    <property type="term" value="F:protein serine kinase activity"/>
    <property type="evidence" value="ECO:0007669"/>
    <property type="project" value="RHEA"/>
</dbReference>
<dbReference type="GO" id="GO:0004674">
    <property type="term" value="F:protein serine/threonine kinase activity"/>
    <property type="evidence" value="ECO:0007669"/>
    <property type="project" value="UniProtKB-KW"/>
</dbReference>
<dbReference type="GO" id="GO:0048527">
    <property type="term" value="P:lateral root development"/>
    <property type="evidence" value="ECO:0000315"/>
    <property type="project" value="TAIR"/>
</dbReference>
<dbReference type="GO" id="GO:0006970">
    <property type="term" value="P:response to osmotic stress"/>
    <property type="evidence" value="ECO:0000314"/>
    <property type="project" value="TAIR"/>
</dbReference>
<dbReference type="GO" id="GO:0009651">
    <property type="term" value="P:response to salt stress"/>
    <property type="evidence" value="ECO:0000314"/>
    <property type="project" value="TAIR"/>
</dbReference>
<dbReference type="CDD" id="cd14662">
    <property type="entry name" value="STKc_SnRK2"/>
    <property type="match status" value="1"/>
</dbReference>
<dbReference type="FunFam" id="1.10.510.10:FF:000132">
    <property type="entry name" value="Serine/threonine-protein kinase SRK2A"/>
    <property type="match status" value="1"/>
</dbReference>
<dbReference type="FunFam" id="3.30.200.20:FF:000045">
    <property type="entry name" value="Serine/threonine-protein kinase SRK2E"/>
    <property type="match status" value="1"/>
</dbReference>
<dbReference type="Gene3D" id="3.30.200.20">
    <property type="entry name" value="Phosphorylase Kinase, domain 1"/>
    <property type="match status" value="1"/>
</dbReference>
<dbReference type="Gene3D" id="1.10.510.10">
    <property type="entry name" value="Transferase(Phosphotransferase) domain 1"/>
    <property type="match status" value="1"/>
</dbReference>
<dbReference type="InterPro" id="IPR011009">
    <property type="entry name" value="Kinase-like_dom_sf"/>
</dbReference>
<dbReference type="InterPro" id="IPR000719">
    <property type="entry name" value="Prot_kinase_dom"/>
</dbReference>
<dbReference type="InterPro" id="IPR017441">
    <property type="entry name" value="Protein_kinase_ATP_BS"/>
</dbReference>
<dbReference type="InterPro" id="IPR008271">
    <property type="entry name" value="Ser/Thr_kinase_AS"/>
</dbReference>
<dbReference type="PANTHER" id="PTHR24343">
    <property type="entry name" value="SERINE/THREONINE KINASE"/>
    <property type="match status" value="1"/>
</dbReference>
<dbReference type="PANTHER" id="PTHR24343:SF376">
    <property type="entry name" value="SERINE_THREONINE-PROTEIN KINASE SRK2A-RELATED"/>
    <property type="match status" value="1"/>
</dbReference>
<dbReference type="Pfam" id="PF00069">
    <property type="entry name" value="Pkinase"/>
    <property type="match status" value="1"/>
</dbReference>
<dbReference type="SMART" id="SM00220">
    <property type="entry name" value="S_TKc"/>
    <property type="match status" value="1"/>
</dbReference>
<dbReference type="SUPFAM" id="SSF56112">
    <property type="entry name" value="Protein kinase-like (PK-like)"/>
    <property type="match status" value="1"/>
</dbReference>
<dbReference type="PROSITE" id="PS00107">
    <property type="entry name" value="PROTEIN_KINASE_ATP"/>
    <property type="match status" value="1"/>
</dbReference>
<dbReference type="PROSITE" id="PS50011">
    <property type="entry name" value="PROTEIN_KINASE_DOM"/>
    <property type="match status" value="1"/>
</dbReference>
<dbReference type="PROSITE" id="PS00108">
    <property type="entry name" value="PROTEIN_KINASE_ST"/>
    <property type="match status" value="1"/>
</dbReference>
<gene>
    <name type="primary">SRK2B</name>
    <name type="synonym">OSKL6</name>
    <name type="synonym">SNRK2.10</name>
    <name type="ordered locus">At1g60940</name>
    <name type="ORF">T7P1.8</name>
</gene>
<keyword id="KW-0067">ATP-binding</keyword>
<keyword id="KW-0418">Kinase</keyword>
<keyword id="KW-0547">Nucleotide-binding</keyword>
<keyword id="KW-0597">Phosphoprotein</keyword>
<keyword id="KW-1185">Reference proteome</keyword>
<keyword id="KW-0723">Serine/threonine-protein kinase</keyword>
<keyword id="KW-0808">Transferase</keyword>